<reference key="1">
    <citation type="journal article" date="2005" name="Science">
        <title>Bats are natural reservoirs of SARS-like coronaviruses.</title>
        <authorList>
            <person name="Li W."/>
            <person name="Shi Z."/>
            <person name="Yu M."/>
            <person name="Ren W."/>
            <person name="Smith C."/>
            <person name="Epstein J.H."/>
            <person name="Wang H."/>
            <person name="Crameri G."/>
            <person name="Hu Z."/>
            <person name="Zhang H."/>
            <person name="Zhang J."/>
            <person name="McEachern J."/>
            <person name="Field H."/>
            <person name="Daszak P."/>
            <person name="Eaton B.T."/>
            <person name="Zhang S."/>
            <person name="Wang L.F."/>
        </authorList>
    </citation>
    <scope>NUCLEOTIDE SEQUENCE [GENOMIC RNA]</scope>
</reference>
<dbReference type="EMBL" id="DQ071615">
    <property type="protein sequence ID" value="AAZ67049.1"/>
    <property type="molecule type" value="Genomic_RNA"/>
</dbReference>
<dbReference type="BMRB" id="Q3I5I7"/>
<dbReference type="SMR" id="Q3I5I7"/>
<dbReference type="IntAct" id="Q3I5I7">
    <property type="interactions" value="1"/>
</dbReference>
<dbReference type="Proteomes" id="UP000006570">
    <property type="component" value="Genome"/>
</dbReference>
<dbReference type="GO" id="GO:0044172">
    <property type="term" value="C:host cell endoplasmic reticulum-Golgi intermediate compartment"/>
    <property type="evidence" value="ECO:0007669"/>
    <property type="project" value="UniProtKB-SubCell"/>
</dbReference>
<dbReference type="GO" id="GO:0044177">
    <property type="term" value="C:host cell Golgi apparatus"/>
    <property type="evidence" value="ECO:0007669"/>
    <property type="project" value="UniProtKB-SubCell"/>
</dbReference>
<dbReference type="GO" id="GO:1990904">
    <property type="term" value="C:ribonucleoprotein complex"/>
    <property type="evidence" value="ECO:0007669"/>
    <property type="project" value="UniProtKB-KW"/>
</dbReference>
<dbReference type="GO" id="GO:0019013">
    <property type="term" value="C:viral nucleocapsid"/>
    <property type="evidence" value="ECO:0007669"/>
    <property type="project" value="UniProtKB-UniRule"/>
</dbReference>
<dbReference type="GO" id="GO:0003723">
    <property type="term" value="F:RNA binding"/>
    <property type="evidence" value="ECO:0007669"/>
    <property type="project" value="UniProtKB-UniRule"/>
</dbReference>
<dbReference type="CDD" id="cd21595">
    <property type="entry name" value="CoV_N-CTD"/>
    <property type="match status" value="1"/>
</dbReference>
<dbReference type="CDD" id="cd21554">
    <property type="entry name" value="CoV_N-NTD"/>
    <property type="match status" value="1"/>
</dbReference>
<dbReference type="HAMAP" id="MF_04096">
    <property type="entry name" value="BETA_CORONA_NCAP"/>
    <property type="match status" value="1"/>
</dbReference>
<dbReference type="InterPro" id="IPR044344">
    <property type="entry name" value="N_prot_C_CoV"/>
</dbReference>
<dbReference type="InterPro" id="IPR044345">
    <property type="entry name" value="N_prot_N_CoV"/>
</dbReference>
<dbReference type="InterPro" id="IPR043505">
    <property type="entry name" value="NCAP_bCoV"/>
</dbReference>
<dbReference type="InterPro" id="IPR001218">
    <property type="entry name" value="Nucleocap_CoV"/>
</dbReference>
<dbReference type="InterPro" id="IPR037179">
    <property type="entry name" value="Nucleocapsid_C"/>
</dbReference>
<dbReference type="InterPro" id="IPR037195">
    <property type="entry name" value="Nucleocapsid_N"/>
</dbReference>
<dbReference type="Pfam" id="PF00937">
    <property type="entry name" value="CoV_nucleocap"/>
    <property type="match status" value="1"/>
</dbReference>
<dbReference type="PIRSF" id="PIRSF003888">
    <property type="entry name" value="Corona_nucleocap"/>
    <property type="match status" value="1"/>
</dbReference>
<dbReference type="SUPFAM" id="SSF110304">
    <property type="entry name" value="Coronavirus RNA-binding domain"/>
    <property type="match status" value="1"/>
</dbReference>
<dbReference type="SUPFAM" id="SSF103068">
    <property type="entry name" value="Nucleocapsid protein dimerization domain"/>
    <property type="match status" value="1"/>
</dbReference>
<dbReference type="PROSITE" id="PS51929">
    <property type="entry name" value="COV_N_CTD"/>
    <property type="match status" value="1"/>
</dbReference>
<dbReference type="PROSITE" id="PS51928">
    <property type="entry name" value="COV_N_NTD"/>
    <property type="match status" value="1"/>
</dbReference>
<comment type="function">
    <text evidence="2">Packages the positive strand viral genome RNA into a helical ribonucleocapsid (RNP) and plays a fundamental role during virion assembly through its interactions with the viral genome and membrane protein M. Plays an important role in enhancing the efficiency of subgenomic viral RNA transcription as well as viral replication.</text>
</comment>
<comment type="subunit">
    <text evidence="2">Homooligomer. Both monomeric and oligomeric forms interact with RNA. Interacts with protein M. Interacts with NSP3; this interaction serves to tether the genome to the newly translated replicase-transcriptase complex at a very early stage of infection.</text>
</comment>
<comment type="subcellular location">
    <subcellularLocation>
        <location evidence="2">Virion</location>
    </subcellularLocation>
    <subcellularLocation>
        <location evidence="2">Host endoplasmic reticulum-Golgi intermediate compartment</location>
    </subcellularLocation>
    <subcellularLocation>
        <location evidence="2">Host Golgi apparatus</location>
    </subcellularLocation>
    <text evidence="2">Located inside the virion, complexed with the viral RNA. Probably associates with ER-derived membranes where it participates in viral RNA synthesis and virus budding.</text>
</comment>
<comment type="PTM">
    <text evidence="2">ADP-ribosylated. The ADP-ribosylation is retained in the virion during infection.</text>
</comment>
<comment type="PTM">
    <text evidence="2">Phosphorylated on serine and threonine residues.</text>
</comment>
<comment type="similarity">
    <text evidence="2">Belongs to the betacoronavirus nucleocapsid protein family.</text>
</comment>
<organism>
    <name type="scientific">Bat coronavirus Rp3/2004</name>
    <name type="common">BtCoV/Rp3/2004</name>
    <name type="synonym">SARS-like coronavirus Rp3</name>
    <dbReference type="NCBI Taxonomy" id="349344"/>
    <lineage>
        <taxon>Viruses</taxon>
        <taxon>Riboviria</taxon>
        <taxon>Orthornavirae</taxon>
        <taxon>Pisuviricota</taxon>
        <taxon>Pisoniviricetes</taxon>
        <taxon>Nidovirales</taxon>
        <taxon>Cornidovirineae</taxon>
        <taxon>Coronaviridae</taxon>
        <taxon>Orthocoronavirinae</taxon>
        <taxon>Betacoronavirus</taxon>
        <taxon>Sarbecovirus</taxon>
        <taxon>Severe acute respiratory syndrome coronavirus</taxon>
    </lineage>
</organism>
<protein>
    <recommendedName>
        <fullName evidence="2">Nucleoprotein</fullName>
    </recommendedName>
    <alternativeName>
        <fullName evidence="2">Nucleocapsid protein</fullName>
        <shortName evidence="2">NC</shortName>
        <shortName evidence="2">Protein N</shortName>
    </alternativeName>
</protein>
<evidence type="ECO:0000250" key="1">
    <source>
        <dbReference type="UniProtKB" id="P0DTC9"/>
    </source>
</evidence>
<evidence type="ECO:0000255" key="2">
    <source>
        <dbReference type="HAMAP-Rule" id="MF_04096"/>
    </source>
</evidence>
<evidence type="ECO:0000255" key="3">
    <source>
        <dbReference type="PROSITE-ProRule" id="PRU01276"/>
    </source>
</evidence>
<evidence type="ECO:0000255" key="4">
    <source>
        <dbReference type="PROSITE-ProRule" id="PRU01277"/>
    </source>
</evidence>
<evidence type="ECO:0000256" key="5">
    <source>
        <dbReference type="SAM" id="MobiDB-lite"/>
    </source>
</evidence>
<name>NCAP_BCRP3</name>
<accession>Q3I5I7</accession>
<organismHost>
    <name type="scientific">Rhinolophus ferrumequinum</name>
    <name type="common">Greater horseshoe bat</name>
    <dbReference type="NCBI Taxonomy" id="59479"/>
</organismHost>
<organismHost>
    <name type="scientific">Rhinolophus macrotis</name>
    <name type="common">Big-eared horseshoe bat</name>
    <dbReference type="NCBI Taxonomy" id="196889"/>
</organismHost>
<organismHost>
    <name type="scientific">Rhinolophus pearsonii</name>
    <dbReference type="NCBI Taxonomy" id="188571"/>
</organismHost>
<organismHost>
    <name type="scientific">Rhinolophus sinicus</name>
    <name type="common">Chinese rufous horseshoe bat</name>
    <dbReference type="NCBI Taxonomy" id="89399"/>
</organismHost>
<proteinExistence type="inferred from homology"/>
<feature type="chain" id="PRO_0000106002" description="Nucleoprotein">
    <location>
        <begin position="1"/>
        <end position="421"/>
    </location>
</feature>
<feature type="domain" description="CoV N NTD" evidence="3">
    <location>
        <begin position="48"/>
        <end position="175"/>
    </location>
</feature>
<feature type="domain" description="CoV N CTD" evidence="4">
    <location>
        <begin position="247"/>
        <end position="364"/>
    </location>
</feature>
<feature type="region of interest" description="Disordered" evidence="5">
    <location>
        <begin position="1"/>
        <end position="49"/>
    </location>
</feature>
<feature type="region of interest" description="RNA-binding" evidence="2">
    <location>
        <begin position="41"/>
        <end position="186"/>
    </location>
</feature>
<feature type="region of interest" description="Disordered" evidence="5">
    <location>
        <begin position="168"/>
        <end position="213"/>
    </location>
</feature>
<feature type="region of interest" description="Disordered" evidence="5">
    <location>
        <begin position="233"/>
        <end position="268"/>
    </location>
</feature>
<feature type="region of interest" description="Dimerization" evidence="2">
    <location>
        <begin position="258"/>
        <end position="361"/>
    </location>
</feature>
<feature type="region of interest" description="Disordered" evidence="5">
    <location>
        <begin position="363"/>
        <end position="421"/>
    </location>
</feature>
<feature type="compositionally biased region" description="Polar residues" evidence="5">
    <location>
        <begin position="1"/>
        <end position="11"/>
    </location>
</feature>
<feature type="compositionally biased region" description="Polar residues" evidence="5">
    <location>
        <begin position="21"/>
        <end position="30"/>
    </location>
</feature>
<feature type="compositionally biased region" description="Low complexity" evidence="5">
    <location>
        <begin position="179"/>
        <end position="206"/>
    </location>
</feature>
<feature type="compositionally biased region" description="Polar residues" evidence="5">
    <location>
        <begin position="233"/>
        <end position="248"/>
    </location>
</feature>
<feature type="compositionally biased region" description="Basic and acidic residues" evidence="5">
    <location>
        <begin position="367"/>
        <end position="378"/>
    </location>
</feature>
<feature type="compositionally biased region" description="Polar residues" evidence="5">
    <location>
        <begin position="405"/>
        <end position="421"/>
    </location>
</feature>
<feature type="binding site" evidence="1">
    <location>
        <position position="92"/>
    </location>
    <ligand>
        <name>RNA</name>
        <dbReference type="ChEBI" id="CHEBI:33697"/>
    </ligand>
</feature>
<feature type="binding site" evidence="1">
    <location>
        <position position="107"/>
    </location>
    <ligand>
        <name>RNA</name>
        <dbReference type="ChEBI" id="CHEBI:33697"/>
    </ligand>
</feature>
<feature type="binding site" evidence="1">
    <location>
        <position position="149"/>
    </location>
    <ligand>
        <name>RNA</name>
        <dbReference type="ChEBI" id="CHEBI:33697"/>
    </ligand>
</feature>
<feature type="modified residue" description="Phosphoserine; by host" evidence="2">
    <location>
        <position position="176"/>
    </location>
</feature>
<sequence length="421" mass="46039">MSDNGPQNQRSAPRITFGGPTDSTDNNQDGGRSGARPKQRRPQGLPNNTASWFTALTQHGKEELRFPRGQGVPINTNSGKDDQIGYYRRATRRVRGGDGKMKELSPRWYFYYLGTGPEASLPYGANKEGIVWVATEGALNTPKDHIGTRNPNNNAAIVLQLPQGTTLPKGFYAEGSRGGSQASSRSSSRSRGNSRNSTPGSSRGNSPARMASGGGETALALLLLDRLNQLESKVSGRSQQQQGQTVTKKSAAEASKKPRQKRTATKQYNVTQAFGRRGPEQTQGNFGDQELIRQGTDYKHWPQIAQFAPSASAFFGMSRIGMEVTPSGTWLTYHGAIKLDDKDPQFKDNVILLNKHIDAYKIFPPTEPKKDKKKKTDEAQPLPQRQKKQPTVTLLPAADMDDFSRQLQNSMSGASADSTQA</sequence>
<gene>
    <name evidence="2" type="primary">N</name>
    <name type="ORF">9a</name>
</gene>
<keyword id="KW-0013">ADP-ribosylation</keyword>
<keyword id="KW-1040">Host Golgi apparatus</keyword>
<keyword id="KW-0597">Phosphoprotein</keyword>
<keyword id="KW-0687">Ribonucleoprotein</keyword>
<keyword id="KW-0694">RNA-binding</keyword>
<keyword id="KW-0804">Transcription</keyword>
<keyword id="KW-0805">Transcription regulation</keyword>
<keyword id="KW-0543">Viral nucleoprotein</keyword>
<keyword id="KW-0946">Virion</keyword>